<feature type="chain" id="PRO_0000261364" description="Galactose/methyl galactoside import ATP-binding protein MglA">
    <location>
        <begin position="1"/>
        <end position="506"/>
    </location>
</feature>
<feature type="domain" description="ABC transporter 1" evidence="1">
    <location>
        <begin position="14"/>
        <end position="249"/>
    </location>
</feature>
<feature type="domain" description="ABC transporter 2" evidence="1">
    <location>
        <begin position="264"/>
        <end position="506"/>
    </location>
</feature>
<feature type="binding site" evidence="1">
    <location>
        <begin position="46"/>
        <end position="53"/>
    </location>
    <ligand>
        <name>ATP</name>
        <dbReference type="ChEBI" id="CHEBI:30616"/>
    </ligand>
</feature>
<gene>
    <name evidence="1" type="primary">mglA</name>
    <name type="ordered locus">Z3404</name>
    <name type="ordered locus">ECs3041</name>
</gene>
<protein>
    <recommendedName>
        <fullName evidence="1">Galactose/methyl galactoside import ATP-binding protein MglA</fullName>
        <ecNumber evidence="1">7.5.2.11</ecNumber>
    </recommendedName>
</protein>
<reference key="1">
    <citation type="journal article" date="2001" name="Nature">
        <title>Genome sequence of enterohaemorrhagic Escherichia coli O157:H7.</title>
        <authorList>
            <person name="Perna N.T."/>
            <person name="Plunkett G. III"/>
            <person name="Burland V."/>
            <person name="Mau B."/>
            <person name="Glasner J.D."/>
            <person name="Rose D.J."/>
            <person name="Mayhew G.F."/>
            <person name="Evans P.S."/>
            <person name="Gregor J."/>
            <person name="Kirkpatrick H.A."/>
            <person name="Posfai G."/>
            <person name="Hackett J."/>
            <person name="Klink S."/>
            <person name="Boutin A."/>
            <person name="Shao Y."/>
            <person name="Miller L."/>
            <person name="Grotbeck E.J."/>
            <person name="Davis N.W."/>
            <person name="Lim A."/>
            <person name="Dimalanta E.T."/>
            <person name="Potamousis K."/>
            <person name="Apodaca J."/>
            <person name="Anantharaman T.S."/>
            <person name="Lin J."/>
            <person name="Yen G."/>
            <person name="Schwartz D.C."/>
            <person name="Welch R.A."/>
            <person name="Blattner F.R."/>
        </authorList>
    </citation>
    <scope>NUCLEOTIDE SEQUENCE [LARGE SCALE GENOMIC DNA]</scope>
    <source>
        <strain>O157:H7 / EDL933 / ATCC 700927 / EHEC</strain>
    </source>
</reference>
<reference key="2">
    <citation type="journal article" date="2001" name="DNA Res.">
        <title>Complete genome sequence of enterohemorrhagic Escherichia coli O157:H7 and genomic comparison with a laboratory strain K-12.</title>
        <authorList>
            <person name="Hayashi T."/>
            <person name="Makino K."/>
            <person name="Ohnishi M."/>
            <person name="Kurokawa K."/>
            <person name="Ishii K."/>
            <person name="Yokoyama K."/>
            <person name="Han C.-G."/>
            <person name="Ohtsubo E."/>
            <person name="Nakayama K."/>
            <person name="Murata T."/>
            <person name="Tanaka M."/>
            <person name="Tobe T."/>
            <person name="Iida T."/>
            <person name="Takami H."/>
            <person name="Honda T."/>
            <person name="Sasakawa C."/>
            <person name="Ogasawara N."/>
            <person name="Yasunaga T."/>
            <person name="Kuhara S."/>
            <person name="Shiba T."/>
            <person name="Hattori M."/>
            <person name="Shinagawa H."/>
        </authorList>
    </citation>
    <scope>NUCLEOTIDE SEQUENCE [LARGE SCALE GENOMIC DNA]</scope>
    <source>
        <strain>O157:H7 / Sakai / RIMD 0509952 / EHEC</strain>
    </source>
</reference>
<sequence length="506" mass="56415">MVSSTTPSSGEYLLEMSGINKSFPGVKALDNVNLKVRPHSIHALMGENGAGKSTLLKCLFGIYKKDSGTILFQGKEIDFHSAKEALENGISMVHQELNLVLQRSVMDNMWLGRYPTKGMFVDQDKMYRETKAIFDELDIDIDPRARVGTLSVSQMQMIEIAKAFSYNAKIVIMDEPTSSLTEKEVNHLFTIIRKLKERGCGIVYISHKMEEIFQLCDEVTVLRDGQWIATEPLAGLTMDKIIAMMVGRSLNQRFPDKENKPGEVILEVRNLTSLRQPSIRDVSFDLHKGEILGIAGLVGAKRTDIVETLFGIREKSAGTITLHGKKINNHNANEAINHGFALVTEERRSTGIYAYLDIGFNSLISNIRNYKNKVGLLDNSRMKSDTQWVIDSMRVKTPGHRTQIGSLSGGNQQKVIIGRWLLTQPEILMLDEPTRGIDVGAKFEIYQLIAELAKKGKGIIIISSEMPELLGITDRILVMSNGLVSGIVDTKTTTQNEILRLASLHL</sequence>
<proteinExistence type="inferred from homology"/>
<dbReference type="EC" id="7.5.2.11" evidence="1"/>
<dbReference type="EMBL" id="AE005174">
    <property type="protein sequence ID" value="AAG57287.1"/>
    <property type="molecule type" value="Genomic_DNA"/>
</dbReference>
<dbReference type="EMBL" id="BA000007">
    <property type="protein sequence ID" value="BAB36464.1"/>
    <property type="molecule type" value="Genomic_DNA"/>
</dbReference>
<dbReference type="PIR" id="A91009">
    <property type="entry name" value="A91009"/>
</dbReference>
<dbReference type="PIR" id="C85853">
    <property type="entry name" value="C85853"/>
</dbReference>
<dbReference type="RefSeq" id="NP_311068.1">
    <property type="nucleotide sequence ID" value="NC_002695.1"/>
</dbReference>
<dbReference type="RefSeq" id="WP_000255020.1">
    <property type="nucleotide sequence ID" value="NZ_VOAI01000001.1"/>
</dbReference>
<dbReference type="SMR" id="Q8X5D9"/>
<dbReference type="STRING" id="155864.Z3404"/>
<dbReference type="GeneID" id="916745"/>
<dbReference type="KEGG" id="ece:Z3404"/>
<dbReference type="KEGG" id="ecs:ECs_3041"/>
<dbReference type="PATRIC" id="fig|386585.9.peg.3167"/>
<dbReference type="eggNOG" id="COG1129">
    <property type="taxonomic scope" value="Bacteria"/>
</dbReference>
<dbReference type="HOGENOM" id="CLU_000604_92_3_6"/>
<dbReference type="Proteomes" id="UP000000558">
    <property type="component" value="Chromosome"/>
</dbReference>
<dbReference type="Proteomes" id="UP000002519">
    <property type="component" value="Chromosome"/>
</dbReference>
<dbReference type="GO" id="GO:0005886">
    <property type="term" value="C:plasma membrane"/>
    <property type="evidence" value="ECO:0007669"/>
    <property type="project" value="UniProtKB-SubCell"/>
</dbReference>
<dbReference type="GO" id="GO:0005524">
    <property type="term" value="F:ATP binding"/>
    <property type="evidence" value="ECO:0007669"/>
    <property type="project" value="UniProtKB-KW"/>
</dbReference>
<dbReference type="GO" id="GO:0016887">
    <property type="term" value="F:ATP hydrolysis activity"/>
    <property type="evidence" value="ECO:0007669"/>
    <property type="project" value="InterPro"/>
</dbReference>
<dbReference type="CDD" id="cd03216">
    <property type="entry name" value="ABC_Carb_Monos_I"/>
    <property type="match status" value="1"/>
</dbReference>
<dbReference type="CDD" id="cd03215">
    <property type="entry name" value="ABC_Carb_Monos_II"/>
    <property type="match status" value="1"/>
</dbReference>
<dbReference type="FunFam" id="3.40.50.300:FF:000126">
    <property type="entry name" value="Galactose/methyl galactoside import ATP-binding protein MglA"/>
    <property type="match status" value="1"/>
</dbReference>
<dbReference type="FunFam" id="3.40.50.300:FF:000127">
    <property type="entry name" value="Ribose import ATP-binding protein RbsA"/>
    <property type="match status" value="1"/>
</dbReference>
<dbReference type="Gene3D" id="3.40.50.300">
    <property type="entry name" value="P-loop containing nucleotide triphosphate hydrolases"/>
    <property type="match status" value="2"/>
</dbReference>
<dbReference type="InterPro" id="IPR003593">
    <property type="entry name" value="AAA+_ATPase"/>
</dbReference>
<dbReference type="InterPro" id="IPR050107">
    <property type="entry name" value="ABC_carbohydrate_import_ATPase"/>
</dbReference>
<dbReference type="InterPro" id="IPR003439">
    <property type="entry name" value="ABC_transporter-like_ATP-bd"/>
</dbReference>
<dbReference type="InterPro" id="IPR017871">
    <property type="entry name" value="ABC_transporter-like_CS"/>
</dbReference>
<dbReference type="InterPro" id="IPR027417">
    <property type="entry name" value="P-loop_NTPase"/>
</dbReference>
<dbReference type="NCBIfam" id="NF008215">
    <property type="entry name" value="PRK10982.1"/>
    <property type="match status" value="1"/>
</dbReference>
<dbReference type="PANTHER" id="PTHR43790">
    <property type="entry name" value="CARBOHYDRATE TRANSPORT ATP-BINDING PROTEIN MG119-RELATED"/>
    <property type="match status" value="1"/>
</dbReference>
<dbReference type="PANTHER" id="PTHR43790:SF7">
    <property type="entry name" value="GALACTOSE_METHYL GALACTOSIDE IMPORT ATP-BINDING PROTEIN MGLA"/>
    <property type="match status" value="1"/>
</dbReference>
<dbReference type="Pfam" id="PF00005">
    <property type="entry name" value="ABC_tran"/>
    <property type="match status" value="2"/>
</dbReference>
<dbReference type="SMART" id="SM00382">
    <property type="entry name" value="AAA"/>
    <property type="match status" value="2"/>
</dbReference>
<dbReference type="SUPFAM" id="SSF52540">
    <property type="entry name" value="P-loop containing nucleoside triphosphate hydrolases"/>
    <property type="match status" value="2"/>
</dbReference>
<dbReference type="PROSITE" id="PS00211">
    <property type="entry name" value="ABC_TRANSPORTER_1"/>
    <property type="match status" value="1"/>
</dbReference>
<dbReference type="PROSITE" id="PS50893">
    <property type="entry name" value="ABC_TRANSPORTER_2"/>
    <property type="match status" value="2"/>
</dbReference>
<dbReference type="PROSITE" id="PS51260">
    <property type="entry name" value="MGLA"/>
    <property type="match status" value="1"/>
</dbReference>
<comment type="function">
    <text evidence="1">Part of the ABC transporter complex MglABC involved in galactose/methyl galactoside import. Responsible for energy coupling to the transport system.</text>
</comment>
<comment type="catalytic activity">
    <reaction evidence="1">
        <text>D-galactose(out) + ATP + H2O = D-galactose(in) + ADP + phosphate + H(+)</text>
        <dbReference type="Rhea" id="RHEA:60156"/>
        <dbReference type="ChEBI" id="CHEBI:4139"/>
        <dbReference type="ChEBI" id="CHEBI:15377"/>
        <dbReference type="ChEBI" id="CHEBI:15378"/>
        <dbReference type="ChEBI" id="CHEBI:30616"/>
        <dbReference type="ChEBI" id="CHEBI:43474"/>
        <dbReference type="ChEBI" id="CHEBI:456216"/>
        <dbReference type="EC" id="7.5.2.11"/>
    </reaction>
    <physiologicalReaction direction="left-to-right" evidence="1">
        <dbReference type="Rhea" id="RHEA:60157"/>
    </physiologicalReaction>
</comment>
<comment type="catalytic activity">
    <reaction evidence="1">
        <text>methyl beta-D-galactoside(out) + ATP + H2O = methyl beta-D-galactoside(in) + ADP + phosphate + H(+)</text>
        <dbReference type="Rhea" id="RHEA:72531"/>
        <dbReference type="ChEBI" id="CHEBI:15377"/>
        <dbReference type="ChEBI" id="CHEBI:15378"/>
        <dbReference type="ChEBI" id="CHEBI:17540"/>
        <dbReference type="ChEBI" id="CHEBI:30616"/>
        <dbReference type="ChEBI" id="CHEBI:43474"/>
        <dbReference type="ChEBI" id="CHEBI:456216"/>
    </reaction>
    <physiologicalReaction direction="left-to-right" evidence="1">
        <dbReference type="Rhea" id="RHEA:72532"/>
    </physiologicalReaction>
</comment>
<comment type="subunit">
    <text evidence="1">The complex is composed of one ATP-binding protein (MglA), two transmembrane proteins (MglC) and a solute-binding protein (MglB).</text>
</comment>
<comment type="subcellular location">
    <subcellularLocation>
        <location evidence="1">Cell inner membrane</location>
        <topology evidence="1">Peripheral membrane protein</topology>
    </subcellularLocation>
</comment>
<comment type="similarity">
    <text evidence="1">Belongs to the ABC transporter superfamily. Galactose/methyl galactoside importer (TC 3.A.1.2.3) family.</text>
</comment>
<accession>Q8X5D9</accession>
<accession>Q7AC90</accession>
<evidence type="ECO:0000255" key="1">
    <source>
        <dbReference type="HAMAP-Rule" id="MF_01717"/>
    </source>
</evidence>
<keyword id="KW-0067">ATP-binding</keyword>
<keyword id="KW-0997">Cell inner membrane</keyword>
<keyword id="KW-1003">Cell membrane</keyword>
<keyword id="KW-0472">Membrane</keyword>
<keyword id="KW-0547">Nucleotide-binding</keyword>
<keyword id="KW-1185">Reference proteome</keyword>
<keyword id="KW-0677">Repeat</keyword>
<keyword id="KW-0762">Sugar transport</keyword>
<keyword id="KW-1278">Translocase</keyword>
<keyword id="KW-0813">Transport</keyword>
<name>MGLA_ECO57</name>
<organism>
    <name type="scientific">Escherichia coli O157:H7</name>
    <dbReference type="NCBI Taxonomy" id="83334"/>
    <lineage>
        <taxon>Bacteria</taxon>
        <taxon>Pseudomonadati</taxon>
        <taxon>Pseudomonadota</taxon>
        <taxon>Gammaproteobacteria</taxon>
        <taxon>Enterobacterales</taxon>
        <taxon>Enterobacteriaceae</taxon>
        <taxon>Escherichia</taxon>
    </lineage>
</organism>